<evidence type="ECO:0000255" key="1">
    <source>
        <dbReference type="HAMAP-Rule" id="MF_03137"/>
    </source>
</evidence>
<evidence type="ECO:0000305" key="2"/>
<keyword id="KW-0342">GTP-binding</keyword>
<keyword id="KW-0378">Hydrolase</keyword>
<keyword id="KW-0472">Membrane</keyword>
<keyword id="KW-0496">Mitochondrion</keyword>
<keyword id="KW-0999">Mitochondrion inner membrane</keyword>
<keyword id="KW-0547">Nucleotide-binding</keyword>
<keyword id="KW-0648">Protein biosynthesis</keyword>
<keyword id="KW-1185">Reference proteome</keyword>
<keyword id="KW-0809">Transit peptide</keyword>
<comment type="function">
    <text evidence="1">Promotes mitochondrial protein synthesis. May act as a fidelity factor of the translation reaction, by catalyzing a one-codon backward translocation of tRNAs on improperly translocated ribosomes. Binds to mitochondrial ribosomes in a GTP-dependent manner.</text>
</comment>
<comment type="catalytic activity">
    <reaction evidence="1">
        <text>GTP + H2O = GDP + phosphate + H(+)</text>
        <dbReference type="Rhea" id="RHEA:19669"/>
        <dbReference type="ChEBI" id="CHEBI:15377"/>
        <dbReference type="ChEBI" id="CHEBI:15378"/>
        <dbReference type="ChEBI" id="CHEBI:37565"/>
        <dbReference type="ChEBI" id="CHEBI:43474"/>
        <dbReference type="ChEBI" id="CHEBI:58189"/>
    </reaction>
</comment>
<comment type="subcellular location">
    <subcellularLocation>
        <location evidence="1">Mitochondrion inner membrane</location>
        <topology evidence="1">Peripheral membrane protein</topology>
        <orientation evidence="1">Matrix side</orientation>
    </subcellularLocation>
</comment>
<comment type="similarity">
    <text evidence="2">Belongs to the TRAFAC class translation factor GTPase superfamily. Classic translation factor GTPase family. LepA subfamily.</text>
</comment>
<reference key="1">
    <citation type="journal article" date="2015" name="Genome Announc.">
        <title>Genome sequence of the AIDS-associated pathogen Penicillium marneffei (ATCC18224) and its near taxonomic relative Talaromyces stipitatus (ATCC10500).</title>
        <authorList>
            <person name="Nierman W.C."/>
            <person name="Fedorova-Abrams N.D."/>
            <person name="Andrianopoulos A."/>
        </authorList>
    </citation>
    <scope>NUCLEOTIDE SEQUENCE [LARGE SCALE GENOMIC DNA]</scope>
    <source>
        <strain>ATCC 10500 / CBS 375.48 / QM 6759 / NRRL 1006</strain>
    </source>
</reference>
<sequence length="665" mass="74556">MRGCLQVLRWLSTSPARRPVSSGLRLRSYEIVSPSILRPFTSTVRRQAQASRNVSDLEKRIAEIPIERFRNFCIVAHVDHGKSTLSDRLLELTGVIEPGSNKQVLDKLDVERERGITVKAQTCTMLYNHNGEDYLLHLIDTPGHVDFRAEVSRSYASCGGALLLVDASQGVQAQTVANFYLAFAQGLELVPVLNKVDLPSADPERALEQMRSSFELDTDNAIKVSAKTGLNVEQLLPTVIERIPAPVGDHTNALRMLLVDSWYSTYKGVILLVRVFDGEIRAGDQVVSFATGLKYYVGEVGIMYPDQTPQSVLRAGQVGYIYFNPGMKRSKEAKIGDTFTKVGYEKKVEPLPGFEEPKSMVFVAAYPSDADHFEHLEDSVNQLILNDRSITVQKESSEALGAGFRLGFLGTLHCSVFEDRLRHEHGASILITPPTVPVKVIYKDGKEVTVTNPAHFPDEDEIRAKVAELREPYVMATLTFPDEYLGKVIELCEANRGIQHTLEYFTSSQVILKYELPLGQLVEDFFGKLKGSTKGYATLDYEEAGWKASNIVKLQLLVNKKPVDAVARIVHYSQVERLGKQWVTKFKEHVDRQMFEIIIQAAVGRKVVARETIKPYRKDVLAKLHASDVSRRRKLLEKQKEGRKRLNAIGNVVIDHSAFQAFLSK</sequence>
<gene>
    <name type="primary">guf1</name>
    <name type="ORF">TSTA_002680</name>
</gene>
<proteinExistence type="inferred from homology"/>
<feature type="transit peptide" description="Mitochondrion" evidence="1">
    <location>
        <begin position="1"/>
        <end position="53"/>
    </location>
</feature>
<feature type="chain" id="PRO_0000402906" description="Translation factor guf1, mitochondrial">
    <location>
        <begin position="54"/>
        <end position="665"/>
    </location>
</feature>
<feature type="domain" description="tr-type G">
    <location>
        <begin position="67"/>
        <end position="247"/>
    </location>
</feature>
<feature type="binding site" evidence="1">
    <location>
        <begin position="76"/>
        <end position="83"/>
    </location>
    <ligand>
        <name>GTP</name>
        <dbReference type="ChEBI" id="CHEBI:37565"/>
    </ligand>
</feature>
<feature type="binding site" evidence="1">
    <location>
        <begin position="140"/>
        <end position="144"/>
    </location>
    <ligand>
        <name>GTP</name>
        <dbReference type="ChEBI" id="CHEBI:37565"/>
    </ligand>
</feature>
<feature type="binding site" evidence="1">
    <location>
        <begin position="194"/>
        <end position="197"/>
    </location>
    <ligand>
        <name>GTP</name>
        <dbReference type="ChEBI" id="CHEBI:37565"/>
    </ligand>
</feature>
<dbReference type="EC" id="3.6.5.-"/>
<dbReference type="EMBL" id="EQ962660">
    <property type="protein sequence ID" value="EED12202.1"/>
    <property type="molecule type" value="Genomic_DNA"/>
</dbReference>
<dbReference type="RefSeq" id="XP_002487856.1">
    <property type="nucleotide sequence ID" value="XM_002487811.1"/>
</dbReference>
<dbReference type="SMR" id="B8MS24"/>
<dbReference type="FunCoup" id="B8MS24">
    <property type="interactions" value="707"/>
</dbReference>
<dbReference type="STRING" id="441959.B8MS24"/>
<dbReference type="GeneID" id="8102879"/>
<dbReference type="VEuPathDB" id="FungiDB:TSTA_002680"/>
<dbReference type="eggNOG" id="KOG0462">
    <property type="taxonomic scope" value="Eukaryota"/>
</dbReference>
<dbReference type="HOGENOM" id="CLU_009995_3_1_1"/>
<dbReference type="InParanoid" id="B8MS24"/>
<dbReference type="OMA" id="QVKCDEN"/>
<dbReference type="OrthoDB" id="1074at2759"/>
<dbReference type="PhylomeDB" id="B8MS24"/>
<dbReference type="Proteomes" id="UP000001745">
    <property type="component" value="Unassembled WGS sequence"/>
</dbReference>
<dbReference type="GO" id="GO:0005743">
    <property type="term" value="C:mitochondrial inner membrane"/>
    <property type="evidence" value="ECO:0007669"/>
    <property type="project" value="UniProtKB-SubCell"/>
</dbReference>
<dbReference type="GO" id="GO:0005759">
    <property type="term" value="C:mitochondrial matrix"/>
    <property type="evidence" value="ECO:0007669"/>
    <property type="project" value="UniProtKB-UniRule"/>
</dbReference>
<dbReference type="GO" id="GO:0005525">
    <property type="term" value="F:GTP binding"/>
    <property type="evidence" value="ECO:0007669"/>
    <property type="project" value="UniProtKB-UniRule"/>
</dbReference>
<dbReference type="GO" id="GO:0003924">
    <property type="term" value="F:GTPase activity"/>
    <property type="evidence" value="ECO:0007669"/>
    <property type="project" value="UniProtKB-UniRule"/>
</dbReference>
<dbReference type="GO" id="GO:0097177">
    <property type="term" value="F:mitochondrial ribosome binding"/>
    <property type="evidence" value="ECO:0007669"/>
    <property type="project" value="EnsemblFungi"/>
</dbReference>
<dbReference type="GO" id="GO:0045727">
    <property type="term" value="P:positive regulation of translation"/>
    <property type="evidence" value="ECO:0007669"/>
    <property type="project" value="UniProtKB-UniRule"/>
</dbReference>
<dbReference type="GO" id="GO:0006412">
    <property type="term" value="P:translation"/>
    <property type="evidence" value="ECO:0007669"/>
    <property type="project" value="UniProtKB-KW"/>
</dbReference>
<dbReference type="CDD" id="cd03699">
    <property type="entry name" value="EF4_II"/>
    <property type="match status" value="1"/>
</dbReference>
<dbReference type="CDD" id="cd01890">
    <property type="entry name" value="LepA"/>
    <property type="match status" value="1"/>
</dbReference>
<dbReference type="CDD" id="cd03709">
    <property type="entry name" value="lepA_C"/>
    <property type="match status" value="1"/>
</dbReference>
<dbReference type="FunFam" id="3.40.50.300:FF:000078">
    <property type="entry name" value="Elongation factor 4"/>
    <property type="match status" value="1"/>
</dbReference>
<dbReference type="FunFam" id="2.40.30.10:FF:000015">
    <property type="entry name" value="Translation factor GUF1, mitochondrial"/>
    <property type="match status" value="1"/>
</dbReference>
<dbReference type="FunFam" id="3.30.70.240:FF:000007">
    <property type="entry name" value="Translation factor GUF1, mitochondrial"/>
    <property type="match status" value="1"/>
</dbReference>
<dbReference type="FunFam" id="3.30.70.2570:FF:000001">
    <property type="entry name" value="Translation factor GUF1, mitochondrial"/>
    <property type="match status" value="1"/>
</dbReference>
<dbReference type="FunFam" id="3.30.70.870:FF:000004">
    <property type="entry name" value="Translation factor GUF1, mitochondrial"/>
    <property type="match status" value="1"/>
</dbReference>
<dbReference type="Gene3D" id="3.30.70.240">
    <property type="match status" value="1"/>
</dbReference>
<dbReference type="Gene3D" id="3.30.70.2570">
    <property type="entry name" value="Elongation factor 4, C-terminal domain"/>
    <property type="match status" value="1"/>
</dbReference>
<dbReference type="Gene3D" id="3.30.70.870">
    <property type="entry name" value="Elongation Factor G (Translational Gtpase), domain 3"/>
    <property type="match status" value="1"/>
</dbReference>
<dbReference type="Gene3D" id="3.40.50.300">
    <property type="entry name" value="P-loop containing nucleotide triphosphate hydrolases"/>
    <property type="match status" value="1"/>
</dbReference>
<dbReference type="Gene3D" id="2.40.30.10">
    <property type="entry name" value="Translation factors"/>
    <property type="match status" value="1"/>
</dbReference>
<dbReference type="HAMAP" id="MF_00071">
    <property type="entry name" value="LepA"/>
    <property type="match status" value="1"/>
</dbReference>
<dbReference type="InterPro" id="IPR006297">
    <property type="entry name" value="EF-4"/>
</dbReference>
<dbReference type="InterPro" id="IPR035647">
    <property type="entry name" value="EFG_III/V"/>
</dbReference>
<dbReference type="InterPro" id="IPR000640">
    <property type="entry name" value="EFG_V-like"/>
</dbReference>
<dbReference type="InterPro" id="IPR004161">
    <property type="entry name" value="EFTu-like_2"/>
</dbReference>
<dbReference type="InterPro" id="IPR031157">
    <property type="entry name" value="G_TR_CS"/>
</dbReference>
<dbReference type="InterPro" id="IPR038363">
    <property type="entry name" value="LepA_C_sf"/>
</dbReference>
<dbReference type="InterPro" id="IPR013842">
    <property type="entry name" value="LepA_CTD"/>
</dbReference>
<dbReference type="InterPro" id="IPR035654">
    <property type="entry name" value="LepA_IV"/>
</dbReference>
<dbReference type="InterPro" id="IPR027417">
    <property type="entry name" value="P-loop_NTPase"/>
</dbReference>
<dbReference type="InterPro" id="IPR005225">
    <property type="entry name" value="Small_GTP-bd"/>
</dbReference>
<dbReference type="InterPro" id="IPR000795">
    <property type="entry name" value="T_Tr_GTP-bd_dom"/>
</dbReference>
<dbReference type="InterPro" id="IPR009000">
    <property type="entry name" value="Transl_B-barrel_sf"/>
</dbReference>
<dbReference type="NCBIfam" id="TIGR01393">
    <property type="entry name" value="lepA"/>
    <property type="match status" value="1"/>
</dbReference>
<dbReference type="NCBIfam" id="TIGR00231">
    <property type="entry name" value="small_GTP"/>
    <property type="match status" value="1"/>
</dbReference>
<dbReference type="PANTHER" id="PTHR43512:SF7">
    <property type="entry name" value="TRANSLATION FACTOR GUF1, MITOCHONDRIAL"/>
    <property type="match status" value="1"/>
</dbReference>
<dbReference type="PANTHER" id="PTHR43512">
    <property type="entry name" value="TRANSLATION FACTOR GUF1-RELATED"/>
    <property type="match status" value="1"/>
</dbReference>
<dbReference type="Pfam" id="PF00679">
    <property type="entry name" value="EFG_C"/>
    <property type="match status" value="1"/>
</dbReference>
<dbReference type="Pfam" id="PF00009">
    <property type="entry name" value="GTP_EFTU"/>
    <property type="match status" value="1"/>
</dbReference>
<dbReference type="Pfam" id="PF03144">
    <property type="entry name" value="GTP_EFTU_D2"/>
    <property type="match status" value="1"/>
</dbReference>
<dbReference type="Pfam" id="PF06421">
    <property type="entry name" value="LepA_C"/>
    <property type="match status" value="1"/>
</dbReference>
<dbReference type="PRINTS" id="PR00315">
    <property type="entry name" value="ELONGATNFCT"/>
</dbReference>
<dbReference type="SUPFAM" id="SSF54980">
    <property type="entry name" value="EF-G C-terminal domain-like"/>
    <property type="match status" value="2"/>
</dbReference>
<dbReference type="SUPFAM" id="SSF52540">
    <property type="entry name" value="P-loop containing nucleoside triphosphate hydrolases"/>
    <property type="match status" value="1"/>
</dbReference>
<dbReference type="SUPFAM" id="SSF50447">
    <property type="entry name" value="Translation proteins"/>
    <property type="match status" value="1"/>
</dbReference>
<dbReference type="PROSITE" id="PS00301">
    <property type="entry name" value="G_TR_1"/>
    <property type="match status" value="1"/>
</dbReference>
<dbReference type="PROSITE" id="PS51722">
    <property type="entry name" value="G_TR_2"/>
    <property type="match status" value="1"/>
</dbReference>
<organism>
    <name type="scientific">Talaromyces stipitatus (strain ATCC 10500 / CBS 375.48 / QM 6759 / NRRL 1006)</name>
    <name type="common">Penicillium stipitatum</name>
    <dbReference type="NCBI Taxonomy" id="441959"/>
    <lineage>
        <taxon>Eukaryota</taxon>
        <taxon>Fungi</taxon>
        <taxon>Dikarya</taxon>
        <taxon>Ascomycota</taxon>
        <taxon>Pezizomycotina</taxon>
        <taxon>Eurotiomycetes</taxon>
        <taxon>Eurotiomycetidae</taxon>
        <taxon>Eurotiales</taxon>
        <taxon>Trichocomaceae</taxon>
        <taxon>Talaromyces</taxon>
        <taxon>Talaromyces sect. Talaromyces</taxon>
    </lineage>
</organism>
<name>GUF1_TALSN</name>
<accession>B8MS24</accession>
<protein>
    <recommendedName>
        <fullName evidence="1">Translation factor guf1, mitochondrial</fullName>
        <ecNumber>3.6.5.-</ecNumber>
    </recommendedName>
    <alternativeName>
        <fullName evidence="1">Elongation factor 4 homolog</fullName>
        <shortName evidence="1">EF-4</shortName>
    </alternativeName>
    <alternativeName>
        <fullName evidence="1">GTPase guf1</fullName>
    </alternativeName>
    <alternativeName>
        <fullName evidence="1">Ribosomal back-translocase</fullName>
    </alternativeName>
</protein>